<dbReference type="EMBL" id="Y11251">
    <property type="protein sequence ID" value="CAA72121.1"/>
    <property type="molecule type" value="mRNA"/>
</dbReference>
<dbReference type="EMBL" id="AF030234">
    <property type="protein sequence ID" value="AAC39565.1"/>
    <property type="status" value="ALT_SEQ"/>
    <property type="molecule type" value="mRNA"/>
</dbReference>
<dbReference type="EMBL" id="AC000015">
    <property type="status" value="NOT_ANNOTATED_CDS"/>
    <property type="molecule type" value="Genomic_DNA"/>
</dbReference>
<dbReference type="EMBL" id="CH471111">
    <property type="protein sequence ID" value="EAW57892.1"/>
    <property type="molecule type" value="Genomic_DNA"/>
</dbReference>
<dbReference type="EMBL" id="CH471111">
    <property type="protein sequence ID" value="EAW57894.1"/>
    <property type="molecule type" value="Genomic_DNA"/>
</dbReference>
<dbReference type="EMBL" id="BC040951">
    <property type="protein sequence ID" value="AAH40951.1"/>
    <property type="status" value="ALT_SEQ"/>
    <property type="molecule type" value="mRNA"/>
</dbReference>
<dbReference type="CCDS" id="CCDS8748.2">
    <molecule id="Q99590-1"/>
</dbReference>
<dbReference type="PIR" id="T09073">
    <property type="entry name" value="T09073"/>
</dbReference>
<dbReference type="RefSeq" id="NP_004710.2">
    <molecule id="Q99590-1"/>
    <property type="nucleotide sequence ID" value="NM_004719.3"/>
</dbReference>
<dbReference type="RefSeq" id="XP_005269287.2">
    <property type="nucleotide sequence ID" value="XM_005269230.2"/>
</dbReference>
<dbReference type="RefSeq" id="XP_011537287.1">
    <property type="nucleotide sequence ID" value="XM_011538985.1"/>
</dbReference>
<dbReference type="RefSeq" id="XP_047285835.1">
    <molecule id="Q99590-1"/>
    <property type="nucleotide sequence ID" value="XM_047429879.1"/>
</dbReference>
<dbReference type="RefSeq" id="XP_054229801.1">
    <molecule id="Q99590-1"/>
    <property type="nucleotide sequence ID" value="XM_054373826.1"/>
</dbReference>
<dbReference type="BioGRID" id="114610">
    <property type="interactions" value="133"/>
</dbReference>
<dbReference type="FunCoup" id="Q99590">
    <property type="interactions" value="3317"/>
</dbReference>
<dbReference type="IntAct" id="Q99590">
    <property type="interactions" value="90"/>
</dbReference>
<dbReference type="MINT" id="Q99590"/>
<dbReference type="STRING" id="9606.ENSP00000358374"/>
<dbReference type="GlyCosmos" id="Q99590">
    <property type="glycosylation" value="10 sites, 2 glycans"/>
</dbReference>
<dbReference type="GlyGen" id="Q99590">
    <property type="glycosylation" value="17 sites, 3 N-linked glycans (3 sites), 2 O-linked glycans (13 sites)"/>
</dbReference>
<dbReference type="iPTMnet" id="Q99590"/>
<dbReference type="PhosphoSitePlus" id="Q99590"/>
<dbReference type="SwissPalm" id="Q99590"/>
<dbReference type="BioMuta" id="SCAF11"/>
<dbReference type="DMDM" id="251757337"/>
<dbReference type="jPOST" id="Q99590"/>
<dbReference type="MassIVE" id="Q99590"/>
<dbReference type="PaxDb" id="9606-ENSP00000358374"/>
<dbReference type="PeptideAtlas" id="Q99590"/>
<dbReference type="ProteomicsDB" id="78343">
    <molecule id="Q99590-1"/>
</dbReference>
<dbReference type="ProteomicsDB" id="78344">
    <molecule id="Q99590-2"/>
</dbReference>
<dbReference type="Pumba" id="Q99590"/>
<dbReference type="Antibodypedia" id="25285">
    <property type="antibodies" value="45 antibodies from 16 providers"/>
</dbReference>
<dbReference type="DNASU" id="9169"/>
<dbReference type="Ensembl" id="ENST00000369367.8">
    <molecule id="Q99590-1"/>
    <property type="protein sequence ID" value="ENSP00000358374.3"/>
    <property type="gene ID" value="ENSG00000139218.18"/>
</dbReference>
<dbReference type="Ensembl" id="ENST00000465950.5">
    <molecule id="Q99590-2"/>
    <property type="protein sequence ID" value="ENSP00000449812.1"/>
    <property type="gene ID" value="ENSG00000139218.18"/>
</dbReference>
<dbReference type="GeneID" id="9169"/>
<dbReference type="KEGG" id="hsa:9169"/>
<dbReference type="MANE-Select" id="ENST00000369367.8">
    <property type="protein sequence ID" value="ENSP00000358374.3"/>
    <property type="RefSeq nucleotide sequence ID" value="NM_004719.3"/>
    <property type="RefSeq protein sequence ID" value="NP_004710.2"/>
</dbReference>
<dbReference type="UCSC" id="uc001row.4">
    <molecule id="Q99590-1"/>
    <property type="organism name" value="human"/>
</dbReference>
<dbReference type="AGR" id="HGNC:10784"/>
<dbReference type="CTD" id="9169"/>
<dbReference type="DisGeNET" id="9169"/>
<dbReference type="GeneCards" id="SCAF11"/>
<dbReference type="HGNC" id="HGNC:10784">
    <property type="gene designation" value="SCAF11"/>
</dbReference>
<dbReference type="HPA" id="ENSG00000139218">
    <property type="expression patterns" value="Low tissue specificity"/>
</dbReference>
<dbReference type="MIM" id="603668">
    <property type="type" value="gene"/>
</dbReference>
<dbReference type="neXtProt" id="NX_Q99590"/>
<dbReference type="OpenTargets" id="ENSG00000139218"/>
<dbReference type="PharmGKB" id="PA35700"/>
<dbReference type="VEuPathDB" id="HostDB:ENSG00000139218"/>
<dbReference type="eggNOG" id="KOG0825">
    <property type="taxonomic scope" value="Eukaryota"/>
</dbReference>
<dbReference type="GeneTree" id="ENSGT00950000183205"/>
<dbReference type="InParanoid" id="Q99590"/>
<dbReference type="OMA" id="EMSDSRW"/>
<dbReference type="OrthoDB" id="1935339at2759"/>
<dbReference type="PAN-GO" id="Q99590">
    <property type="GO annotations" value="1 GO annotation based on evolutionary models"/>
</dbReference>
<dbReference type="PhylomeDB" id="Q99590"/>
<dbReference type="TreeFam" id="TF332183"/>
<dbReference type="PathwayCommons" id="Q99590"/>
<dbReference type="SignaLink" id="Q99590"/>
<dbReference type="SIGNOR" id="Q99590"/>
<dbReference type="BioGRID-ORCS" id="9169">
    <property type="hits" value="49 hits in 1160 CRISPR screens"/>
</dbReference>
<dbReference type="ChiTaRS" id="SCAF11">
    <property type="organism name" value="human"/>
</dbReference>
<dbReference type="GeneWiki" id="SFRS2IP"/>
<dbReference type="GenomeRNAi" id="9169"/>
<dbReference type="Pharos" id="Q99590">
    <property type="development level" value="Tdark"/>
</dbReference>
<dbReference type="PRO" id="PR:Q99590"/>
<dbReference type="Proteomes" id="UP000005640">
    <property type="component" value="Chromosome 12"/>
</dbReference>
<dbReference type="RNAct" id="Q99590">
    <property type="molecule type" value="protein"/>
</dbReference>
<dbReference type="Bgee" id="ENSG00000139218">
    <property type="expression patterns" value="Expressed in buccal mucosa cell and 213 other cell types or tissues"/>
</dbReference>
<dbReference type="ExpressionAtlas" id="Q99590">
    <property type="expression patterns" value="baseline and differential"/>
</dbReference>
<dbReference type="GO" id="GO:0016604">
    <property type="term" value="C:nuclear body"/>
    <property type="evidence" value="ECO:0000314"/>
    <property type="project" value="HPA"/>
</dbReference>
<dbReference type="GO" id="GO:0005730">
    <property type="term" value="C:nucleolus"/>
    <property type="evidence" value="ECO:0000314"/>
    <property type="project" value="HPA"/>
</dbReference>
<dbReference type="GO" id="GO:0005654">
    <property type="term" value="C:nucleoplasm"/>
    <property type="evidence" value="ECO:0000314"/>
    <property type="project" value="HPA"/>
</dbReference>
<dbReference type="GO" id="GO:0003723">
    <property type="term" value="F:RNA binding"/>
    <property type="evidence" value="ECO:0007005"/>
    <property type="project" value="UniProtKB"/>
</dbReference>
<dbReference type="GO" id="GO:0008270">
    <property type="term" value="F:zinc ion binding"/>
    <property type="evidence" value="ECO:0007669"/>
    <property type="project" value="UniProtKB-KW"/>
</dbReference>
<dbReference type="GO" id="GO:0006397">
    <property type="term" value="P:mRNA processing"/>
    <property type="evidence" value="ECO:0000304"/>
    <property type="project" value="ProtInc"/>
</dbReference>
<dbReference type="GO" id="GO:0008380">
    <property type="term" value="P:RNA splicing"/>
    <property type="evidence" value="ECO:0000314"/>
    <property type="project" value="UniProtKB"/>
</dbReference>
<dbReference type="GO" id="GO:0000375">
    <property type="term" value="P:RNA splicing, via transesterification reactions"/>
    <property type="evidence" value="ECO:0000314"/>
    <property type="project" value="UniProtKB"/>
</dbReference>
<dbReference type="GO" id="GO:0000245">
    <property type="term" value="P:spliceosomal complex assembly"/>
    <property type="evidence" value="ECO:0000314"/>
    <property type="project" value="UniProtKB"/>
</dbReference>
<dbReference type="CDD" id="cd16636">
    <property type="entry name" value="mRING-HC-C3HC3D_SCAF11"/>
    <property type="match status" value="1"/>
</dbReference>
<dbReference type="FunFam" id="3.30.40.10:FF:000344">
    <property type="entry name" value="protein SCAF11 isoform X1"/>
    <property type="match status" value="1"/>
</dbReference>
<dbReference type="Gene3D" id="3.30.40.10">
    <property type="entry name" value="Zinc/RING finger domain, C3HC4 (zinc finger)"/>
    <property type="match status" value="1"/>
</dbReference>
<dbReference type="InterPro" id="IPR057031">
    <property type="entry name" value="SCAF11-like_C"/>
</dbReference>
<dbReference type="InterPro" id="IPR001841">
    <property type="entry name" value="Znf_RING"/>
</dbReference>
<dbReference type="InterPro" id="IPR013083">
    <property type="entry name" value="Znf_RING/FYVE/PHD"/>
</dbReference>
<dbReference type="InterPro" id="IPR017907">
    <property type="entry name" value="Znf_RING_CS"/>
</dbReference>
<dbReference type="PANTHER" id="PTHR47048">
    <property type="entry name" value="PROTEIN SCAF11"/>
    <property type="match status" value="1"/>
</dbReference>
<dbReference type="PANTHER" id="PTHR47048:SF1">
    <property type="entry name" value="PROTEIN SCAF11"/>
    <property type="match status" value="1"/>
</dbReference>
<dbReference type="Pfam" id="PF23030">
    <property type="entry name" value="SCAF11-like_C"/>
    <property type="match status" value="1"/>
</dbReference>
<dbReference type="Pfam" id="PF13639">
    <property type="entry name" value="zf-RING_2"/>
    <property type="match status" value="1"/>
</dbReference>
<dbReference type="SMART" id="SM00184">
    <property type="entry name" value="RING"/>
    <property type="match status" value="1"/>
</dbReference>
<dbReference type="SUPFAM" id="SSF57850">
    <property type="entry name" value="RING/U-box"/>
    <property type="match status" value="1"/>
</dbReference>
<dbReference type="PROSITE" id="PS00518">
    <property type="entry name" value="ZF_RING_1"/>
    <property type="match status" value="1"/>
</dbReference>
<dbReference type="PROSITE" id="PS50089">
    <property type="entry name" value="ZF_RING_2"/>
    <property type="match status" value="1"/>
</dbReference>
<gene>
    <name type="primary">SCAF11</name>
    <name type="synonym">CASP11</name>
    <name type="synonym">SFRS2IP</name>
    <name type="synonym">SIP1</name>
    <name type="synonym">SRSF2IP</name>
</gene>
<name>SCAFB_HUMAN</name>
<reference key="1">
    <citation type="journal article" date="1997" name="Biol. Chem.">
        <title>A novel SR-related protein specifically interacts with the carboxy-terminal domain (CTD) of RNA polymerase II through a conserved interaction domain.</title>
        <authorList>
            <person name="Tanner S."/>
            <person name="Stagljar I."/>
            <person name="Georgiev O."/>
            <person name="Schaffner W."/>
            <person name="Bourquin J.-P."/>
        </authorList>
    </citation>
    <scope>NUCLEOTIDE SEQUENCE [MRNA] (ISOFORM 2)</scope>
    <scope>TISSUE SPECIFICITY</scope>
    <source>
        <tissue>Lymphocyte</tissue>
    </source>
</reference>
<reference key="2">
    <citation type="journal article" date="1998" name="Mol. Cell. Biol.">
        <title>Sip1, a novel RS domain-containing protein essential for pre-mRNA splicing.</title>
        <authorList>
            <person name="Zhang W.-J."/>
            <person name="Wu J.Y."/>
        </authorList>
    </citation>
    <scope>NUCLEOTIDE SEQUENCE [MRNA] (ISOFORM 1)</scope>
    <scope>FUNCTION</scope>
    <scope>INTERACTION WITH SRSF2; U2AF2 AND SNRNP70</scope>
    <scope>SUBCELLULAR LOCATION</scope>
    <source>
        <tissue>Cervix carcinoma</tissue>
    </source>
</reference>
<reference key="3">
    <citation type="journal article" date="2006" name="Nature">
        <title>The finished DNA sequence of human chromosome 12.</title>
        <authorList>
            <person name="Scherer S.E."/>
            <person name="Muzny D.M."/>
            <person name="Buhay C.J."/>
            <person name="Chen R."/>
            <person name="Cree A."/>
            <person name="Ding Y."/>
            <person name="Dugan-Rocha S."/>
            <person name="Gill R."/>
            <person name="Gunaratne P."/>
            <person name="Harris R.A."/>
            <person name="Hawes A.C."/>
            <person name="Hernandez J."/>
            <person name="Hodgson A.V."/>
            <person name="Hume J."/>
            <person name="Jackson A."/>
            <person name="Khan Z.M."/>
            <person name="Kovar-Smith C."/>
            <person name="Lewis L.R."/>
            <person name="Lozado R.J."/>
            <person name="Metzker M.L."/>
            <person name="Milosavljevic A."/>
            <person name="Miner G.R."/>
            <person name="Montgomery K.T."/>
            <person name="Morgan M.B."/>
            <person name="Nazareth L.V."/>
            <person name="Scott G."/>
            <person name="Sodergren E."/>
            <person name="Song X.-Z."/>
            <person name="Steffen D."/>
            <person name="Lovering R.C."/>
            <person name="Wheeler D.A."/>
            <person name="Worley K.C."/>
            <person name="Yuan Y."/>
            <person name="Zhang Z."/>
            <person name="Adams C.Q."/>
            <person name="Ansari-Lari M.A."/>
            <person name="Ayele M."/>
            <person name="Brown M.J."/>
            <person name="Chen G."/>
            <person name="Chen Z."/>
            <person name="Clerc-Blankenburg K.P."/>
            <person name="Davis C."/>
            <person name="Delgado O."/>
            <person name="Dinh H.H."/>
            <person name="Draper H."/>
            <person name="Gonzalez-Garay M.L."/>
            <person name="Havlak P."/>
            <person name="Jackson L.R."/>
            <person name="Jacob L.S."/>
            <person name="Kelly S.H."/>
            <person name="Li L."/>
            <person name="Li Z."/>
            <person name="Liu J."/>
            <person name="Liu W."/>
            <person name="Lu J."/>
            <person name="Maheshwari M."/>
            <person name="Nguyen B.-V."/>
            <person name="Okwuonu G.O."/>
            <person name="Pasternak S."/>
            <person name="Perez L.M."/>
            <person name="Plopper F.J.H."/>
            <person name="Santibanez J."/>
            <person name="Shen H."/>
            <person name="Tabor P.E."/>
            <person name="Verduzco D."/>
            <person name="Waldron L."/>
            <person name="Wang Q."/>
            <person name="Williams G.A."/>
            <person name="Zhang J."/>
            <person name="Zhou J."/>
            <person name="Allen C.C."/>
            <person name="Amin A.G."/>
            <person name="Anyalebechi V."/>
            <person name="Bailey M."/>
            <person name="Barbaria J.A."/>
            <person name="Bimage K.E."/>
            <person name="Bryant N.P."/>
            <person name="Burch P.E."/>
            <person name="Burkett C.E."/>
            <person name="Burrell K.L."/>
            <person name="Calderon E."/>
            <person name="Cardenas V."/>
            <person name="Carter K."/>
            <person name="Casias K."/>
            <person name="Cavazos I."/>
            <person name="Cavazos S.R."/>
            <person name="Ceasar H."/>
            <person name="Chacko J."/>
            <person name="Chan S.N."/>
            <person name="Chavez D."/>
            <person name="Christopoulos C."/>
            <person name="Chu J."/>
            <person name="Cockrell R."/>
            <person name="Cox C.D."/>
            <person name="Dang M."/>
            <person name="Dathorne S.R."/>
            <person name="David R."/>
            <person name="Davis C.M."/>
            <person name="Davy-Carroll L."/>
            <person name="Deshazo D.R."/>
            <person name="Donlin J.E."/>
            <person name="D'Souza L."/>
            <person name="Eaves K.A."/>
            <person name="Egan A."/>
            <person name="Emery-Cohen A.J."/>
            <person name="Escotto M."/>
            <person name="Flagg N."/>
            <person name="Forbes L.D."/>
            <person name="Gabisi A.M."/>
            <person name="Garza M."/>
            <person name="Hamilton C."/>
            <person name="Henderson N."/>
            <person name="Hernandez O."/>
            <person name="Hines S."/>
            <person name="Hogues M.E."/>
            <person name="Huang M."/>
            <person name="Idlebird D.G."/>
            <person name="Johnson R."/>
            <person name="Jolivet A."/>
            <person name="Jones S."/>
            <person name="Kagan R."/>
            <person name="King L.M."/>
            <person name="Leal B."/>
            <person name="Lebow H."/>
            <person name="Lee S."/>
            <person name="LeVan J.M."/>
            <person name="Lewis L.C."/>
            <person name="London P."/>
            <person name="Lorensuhewa L.M."/>
            <person name="Loulseged H."/>
            <person name="Lovett D.A."/>
            <person name="Lucier A."/>
            <person name="Lucier R.L."/>
            <person name="Ma J."/>
            <person name="Madu R.C."/>
            <person name="Mapua P."/>
            <person name="Martindale A.D."/>
            <person name="Martinez E."/>
            <person name="Massey E."/>
            <person name="Mawhiney S."/>
            <person name="Meador M.G."/>
            <person name="Mendez S."/>
            <person name="Mercado C."/>
            <person name="Mercado I.C."/>
            <person name="Merritt C.E."/>
            <person name="Miner Z.L."/>
            <person name="Minja E."/>
            <person name="Mitchell T."/>
            <person name="Mohabbat F."/>
            <person name="Mohabbat K."/>
            <person name="Montgomery B."/>
            <person name="Moore N."/>
            <person name="Morris S."/>
            <person name="Munidasa M."/>
            <person name="Ngo R.N."/>
            <person name="Nguyen N.B."/>
            <person name="Nickerson E."/>
            <person name="Nwaokelemeh O.O."/>
            <person name="Nwokenkwo S."/>
            <person name="Obregon M."/>
            <person name="Oguh M."/>
            <person name="Oragunye N."/>
            <person name="Oviedo R.J."/>
            <person name="Parish B.J."/>
            <person name="Parker D.N."/>
            <person name="Parrish J."/>
            <person name="Parks K.L."/>
            <person name="Paul H.A."/>
            <person name="Payton B.A."/>
            <person name="Perez A."/>
            <person name="Perrin W."/>
            <person name="Pickens A."/>
            <person name="Primus E.L."/>
            <person name="Pu L.-L."/>
            <person name="Puazo M."/>
            <person name="Quiles M.M."/>
            <person name="Quiroz J.B."/>
            <person name="Rabata D."/>
            <person name="Reeves K."/>
            <person name="Ruiz S.J."/>
            <person name="Shao H."/>
            <person name="Sisson I."/>
            <person name="Sonaike T."/>
            <person name="Sorelle R.P."/>
            <person name="Sutton A.E."/>
            <person name="Svatek A.F."/>
            <person name="Svetz L.A."/>
            <person name="Tamerisa K.S."/>
            <person name="Taylor T.R."/>
            <person name="Teague B."/>
            <person name="Thomas N."/>
            <person name="Thorn R.D."/>
            <person name="Trejos Z.Y."/>
            <person name="Trevino B.K."/>
            <person name="Ukegbu O.N."/>
            <person name="Urban J.B."/>
            <person name="Vasquez L.I."/>
            <person name="Vera V.A."/>
            <person name="Villasana D.M."/>
            <person name="Wang L."/>
            <person name="Ward-Moore S."/>
            <person name="Warren J.T."/>
            <person name="Wei X."/>
            <person name="White F."/>
            <person name="Williamson A.L."/>
            <person name="Wleczyk R."/>
            <person name="Wooden H.S."/>
            <person name="Wooden S.H."/>
            <person name="Yen J."/>
            <person name="Yoon L."/>
            <person name="Yoon V."/>
            <person name="Zorrilla S.E."/>
            <person name="Nelson D."/>
            <person name="Kucherlapati R."/>
            <person name="Weinstock G."/>
            <person name="Gibbs R.A."/>
        </authorList>
    </citation>
    <scope>NUCLEOTIDE SEQUENCE [LARGE SCALE GENOMIC DNA]</scope>
</reference>
<reference key="4">
    <citation type="submission" date="2005-07" db="EMBL/GenBank/DDBJ databases">
        <authorList>
            <person name="Mural R.J."/>
            <person name="Istrail S."/>
            <person name="Sutton G.G."/>
            <person name="Florea L."/>
            <person name="Halpern A.L."/>
            <person name="Mobarry C.M."/>
            <person name="Lippert R."/>
            <person name="Walenz B."/>
            <person name="Shatkay H."/>
            <person name="Dew I."/>
            <person name="Miller J.R."/>
            <person name="Flanigan M.J."/>
            <person name="Edwards N.J."/>
            <person name="Bolanos R."/>
            <person name="Fasulo D."/>
            <person name="Halldorsson B.V."/>
            <person name="Hannenhalli S."/>
            <person name="Turner R."/>
            <person name="Yooseph S."/>
            <person name="Lu F."/>
            <person name="Nusskern D.R."/>
            <person name="Shue B.C."/>
            <person name="Zheng X.H."/>
            <person name="Zhong F."/>
            <person name="Delcher A.L."/>
            <person name="Huson D.H."/>
            <person name="Kravitz S.A."/>
            <person name="Mouchard L."/>
            <person name="Reinert K."/>
            <person name="Remington K.A."/>
            <person name="Clark A.G."/>
            <person name="Waterman M.S."/>
            <person name="Eichler E.E."/>
            <person name="Adams M.D."/>
            <person name="Hunkapiller M.W."/>
            <person name="Myers E.W."/>
            <person name="Venter J.C."/>
        </authorList>
    </citation>
    <scope>NUCLEOTIDE SEQUENCE [LARGE SCALE GENOMIC DNA]</scope>
</reference>
<reference key="5">
    <citation type="journal article" date="2004" name="Genome Res.">
        <title>The status, quality, and expansion of the NIH full-length cDNA project: the Mammalian Gene Collection (MGC).</title>
        <authorList>
            <consortium name="The MGC Project Team"/>
        </authorList>
    </citation>
    <scope>NUCLEOTIDE SEQUENCE [LARGE SCALE MRNA] OF 212-669 (ISOFORM 1)</scope>
    <source>
        <tissue>Prostate</tissue>
    </source>
</reference>
<reference key="6">
    <citation type="journal article" date="1999" name="Int. J. Cancer">
        <title>Antigens recognized by autologous antibody in patients with renal-cell carcinoma.</title>
        <authorList>
            <person name="Scanlan M.J."/>
            <person name="Gordan J.D."/>
            <person name="Williamson B."/>
            <person name="Stockert E."/>
            <person name="Bander N.H."/>
            <person name="Jongeneel C.V."/>
            <person name="Gure A.O."/>
            <person name="Jaeger D."/>
            <person name="Jaeger E."/>
            <person name="Knuth A."/>
            <person name="Chen Y.-T."/>
            <person name="Old L.J."/>
        </authorList>
    </citation>
    <scope>IDENTIFICATION AS A RENAL CANCER ANTIGEN</scope>
    <source>
        <tissue>Renal cell carcinoma</tissue>
    </source>
</reference>
<reference key="7">
    <citation type="journal article" date="2006" name="Cell">
        <title>Global, in vivo, and site-specific phosphorylation dynamics in signaling networks.</title>
        <authorList>
            <person name="Olsen J.V."/>
            <person name="Blagoev B."/>
            <person name="Gnad F."/>
            <person name="Macek B."/>
            <person name="Kumar C."/>
            <person name="Mortensen P."/>
            <person name="Mann M."/>
        </authorList>
    </citation>
    <scope>PHOSPHORYLATION [LARGE SCALE ANALYSIS] AT SER-405; SER-723 AND SER-726</scope>
    <scope>IDENTIFICATION BY MASS SPECTROMETRY [LARGE SCALE ANALYSIS]</scope>
    <source>
        <tissue>Cervix carcinoma</tissue>
    </source>
</reference>
<reference key="8">
    <citation type="journal article" date="2007" name="Science">
        <title>ATM and ATR substrate analysis reveals extensive protein networks responsive to DNA damage.</title>
        <authorList>
            <person name="Matsuoka S."/>
            <person name="Ballif B.A."/>
            <person name="Smogorzewska A."/>
            <person name="McDonald E.R. III"/>
            <person name="Hurov K.E."/>
            <person name="Luo J."/>
            <person name="Bakalarski C.E."/>
            <person name="Zhao Z."/>
            <person name="Solimini N."/>
            <person name="Lerenthal Y."/>
            <person name="Shiloh Y."/>
            <person name="Gygi S.P."/>
            <person name="Elledge S.J."/>
        </authorList>
    </citation>
    <scope>IDENTIFICATION BY MASS SPECTROMETRY [LARGE SCALE ANALYSIS]</scope>
    <source>
        <tissue>Embryonic kidney</tissue>
    </source>
</reference>
<reference key="9">
    <citation type="journal article" date="2008" name="J. Proteome Res.">
        <title>Combining protein-based IMAC, peptide-based IMAC, and MudPIT for efficient phosphoproteomic analysis.</title>
        <authorList>
            <person name="Cantin G.T."/>
            <person name="Yi W."/>
            <person name="Lu B."/>
            <person name="Park S.K."/>
            <person name="Xu T."/>
            <person name="Lee J.-D."/>
            <person name="Yates J.R. III"/>
        </authorList>
    </citation>
    <scope>PHOSPHORYLATION [LARGE SCALE ANALYSIS] AT SER-608</scope>
    <scope>IDENTIFICATION BY MASS SPECTROMETRY [LARGE SCALE ANALYSIS]</scope>
    <source>
        <tissue>Cervix carcinoma</tissue>
    </source>
</reference>
<reference key="10">
    <citation type="journal article" date="2008" name="Proc. Natl. Acad. Sci. U.S.A.">
        <title>A quantitative atlas of mitotic phosphorylation.</title>
        <authorList>
            <person name="Dephoure N."/>
            <person name="Zhou C."/>
            <person name="Villen J."/>
            <person name="Beausoleil S.A."/>
            <person name="Bakalarski C.E."/>
            <person name="Elledge S.J."/>
            <person name="Gygi S.P."/>
        </authorList>
    </citation>
    <scope>PHOSPHORYLATION [LARGE SCALE ANALYSIS] AT SER-338; SER-341; SER-344; SER-405; THR-410; SER-533; SER-608; SER-614; SER-680; SER-796; SER-802; THR-807; SER-963 AND SER-1127</scope>
    <scope>IDENTIFICATION BY MASS SPECTROMETRY [LARGE SCALE ANALYSIS]</scope>
    <source>
        <tissue>Cervix carcinoma</tissue>
    </source>
</reference>
<reference key="11">
    <citation type="journal article" date="2009" name="Anal. Chem.">
        <title>Lys-N and trypsin cover complementary parts of the phosphoproteome in a refined SCX-based approach.</title>
        <authorList>
            <person name="Gauci S."/>
            <person name="Helbig A.O."/>
            <person name="Slijper M."/>
            <person name="Krijgsveld J."/>
            <person name="Heck A.J."/>
            <person name="Mohammed S."/>
        </authorList>
    </citation>
    <scope>IDENTIFICATION BY MASS SPECTROMETRY [LARGE SCALE ANALYSIS]</scope>
</reference>
<reference key="12">
    <citation type="journal article" date="2009" name="Sci. Signal.">
        <title>Quantitative phosphoproteomic analysis of T cell receptor signaling reveals system-wide modulation of protein-protein interactions.</title>
        <authorList>
            <person name="Mayya V."/>
            <person name="Lundgren D.H."/>
            <person name="Hwang S.-I."/>
            <person name="Rezaul K."/>
            <person name="Wu L."/>
            <person name="Eng J.K."/>
            <person name="Rodionov V."/>
            <person name="Han D.K."/>
        </authorList>
    </citation>
    <scope>PHOSPHORYLATION [LARGE SCALE ANALYSIS] AT SER-405; SER-413; SER-608; SER-796; SER-798 AND SER-802</scope>
    <scope>IDENTIFICATION BY MASS SPECTROMETRY [LARGE SCALE ANALYSIS]</scope>
    <source>
        <tissue>Leukemic T-cell</tissue>
    </source>
</reference>
<reference key="13">
    <citation type="journal article" date="2010" name="Sci. Signal.">
        <title>Quantitative phosphoproteomics reveals widespread full phosphorylation site occupancy during mitosis.</title>
        <authorList>
            <person name="Olsen J.V."/>
            <person name="Vermeulen M."/>
            <person name="Santamaria A."/>
            <person name="Kumar C."/>
            <person name="Miller M.L."/>
            <person name="Jensen L.J."/>
            <person name="Gnad F."/>
            <person name="Cox J."/>
            <person name="Jensen T.S."/>
            <person name="Nigg E.A."/>
            <person name="Brunak S."/>
            <person name="Mann M."/>
        </authorList>
    </citation>
    <scope>PHOSPHORYLATION [LARGE SCALE ANALYSIS] AT SER-405; SER-608; SER-614; SER-680; SER-687; SER-771; SER-776; SER-796; SER-1127 AND SER-1169</scope>
    <scope>IDENTIFICATION BY MASS SPECTROMETRY [LARGE SCALE ANALYSIS]</scope>
    <source>
        <tissue>Cervix carcinoma</tissue>
    </source>
</reference>
<reference key="14">
    <citation type="journal article" date="2011" name="BMC Syst. Biol.">
        <title>Initial characterization of the human central proteome.</title>
        <authorList>
            <person name="Burkard T.R."/>
            <person name="Planyavsky M."/>
            <person name="Kaupe I."/>
            <person name="Breitwieser F.P."/>
            <person name="Buerckstuemmer T."/>
            <person name="Bennett K.L."/>
            <person name="Superti-Furga G."/>
            <person name="Colinge J."/>
        </authorList>
    </citation>
    <scope>IDENTIFICATION BY MASS SPECTROMETRY [LARGE SCALE ANALYSIS]</scope>
</reference>
<reference key="15">
    <citation type="journal article" date="2011" name="Sci. Signal.">
        <title>System-wide temporal characterization of the proteome and phosphoproteome of human embryonic stem cell differentiation.</title>
        <authorList>
            <person name="Rigbolt K.T."/>
            <person name="Prokhorova T.A."/>
            <person name="Akimov V."/>
            <person name="Henningsen J."/>
            <person name="Johansen P.T."/>
            <person name="Kratchmarova I."/>
            <person name="Kassem M."/>
            <person name="Mann M."/>
            <person name="Olsen J.V."/>
            <person name="Blagoev B."/>
        </authorList>
    </citation>
    <scope>PHOSPHORYLATION [LARGE SCALE ANALYSIS] AT SER-400; SER-401; SER-402; SER-405; THR-769; SER-776; SER-796 AND SER-802</scope>
    <scope>IDENTIFICATION BY MASS SPECTROMETRY [LARGE SCALE ANALYSIS]</scope>
</reference>
<reference key="16">
    <citation type="journal article" date="2013" name="J. Proteome Res.">
        <title>Toward a comprehensive characterization of a human cancer cell phosphoproteome.</title>
        <authorList>
            <person name="Zhou H."/>
            <person name="Di Palma S."/>
            <person name="Preisinger C."/>
            <person name="Peng M."/>
            <person name="Polat A.N."/>
            <person name="Heck A.J."/>
            <person name="Mohammed S."/>
        </authorList>
    </citation>
    <scope>PHOSPHORYLATION [LARGE SCALE ANALYSIS] AT THR-331; SER-405; SER-413; SER-533; SER-588; SER-608; SER-614; SER-680; SER-687; SER-694; SER-771; SER-776; SER-796; SER-798; SER-802; SER-963; SER-1122; SER-1127; THR-1153 AND SER-1170</scope>
    <scope>IDENTIFICATION BY MASS SPECTROMETRY [LARGE SCALE ANALYSIS]</scope>
    <source>
        <tissue>Cervix carcinoma</tissue>
        <tissue>Erythroleukemia</tissue>
    </source>
</reference>
<reference key="17">
    <citation type="journal article" date="2014" name="J. Proteomics">
        <title>An enzyme assisted RP-RPLC approach for in-depth analysis of human liver phosphoproteome.</title>
        <authorList>
            <person name="Bian Y."/>
            <person name="Song C."/>
            <person name="Cheng K."/>
            <person name="Dong M."/>
            <person name="Wang F."/>
            <person name="Huang J."/>
            <person name="Sun D."/>
            <person name="Wang L."/>
            <person name="Ye M."/>
            <person name="Zou H."/>
        </authorList>
    </citation>
    <scope>PHOSPHORYLATION [LARGE SCALE ANALYSIS] AT SER-608; SER-796; SER-802 AND SER-816</scope>
    <scope>IDENTIFICATION BY MASS SPECTROMETRY [LARGE SCALE ANALYSIS]</scope>
    <source>
        <tissue>Liver</tissue>
    </source>
</reference>
<reference key="18">
    <citation type="journal article" date="2014" name="Mol. Cell. Proteomics">
        <title>Immunoaffinity enrichment and mass spectrometry analysis of protein methylation.</title>
        <authorList>
            <person name="Guo A."/>
            <person name="Gu H."/>
            <person name="Zhou J."/>
            <person name="Mulhern D."/>
            <person name="Wang Y."/>
            <person name="Lee K.A."/>
            <person name="Yang V."/>
            <person name="Aguiar M."/>
            <person name="Kornhauser J."/>
            <person name="Jia X."/>
            <person name="Ren J."/>
            <person name="Beausoleil S.A."/>
            <person name="Silva J.C."/>
            <person name="Vemulapalli V."/>
            <person name="Bedford M.T."/>
            <person name="Comb M.J."/>
        </authorList>
    </citation>
    <scope>METHYLATION [LARGE SCALE ANALYSIS] AT ARG-1151</scope>
    <scope>IDENTIFICATION BY MASS SPECTROMETRY [LARGE SCALE ANALYSIS]</scope>
    <source>
        <tissue>Colon carcinoma</tissue>
    </source>
</reference>
<reference key="19">
    <citation type="journal article" date="2014" name="Nat. Struct. Mol. Biol.">
        <title>Uncovering global SUMOylation signaling networks in a site-specific manner.</title>
        <authorList>
            <person name="Hendriks I.A."/>
            <person name="D'Souza R.C."/>
            <person name="Yang B."/>
            <person name="Verlaan-de Vries M."/>
            <person name="Mann M."/>
            <person name="Vertegaal A.C."/>
        </authorList>
    </citation>
    <scope>SUMOYLATION [LARGE SCALE ANALYSIS] AT LYS-601; LYS-610; LYS-676 AND LYS-1178</scope>
    <scope>IDENTIFICATION BY MASS SPECTROMETRY [LARGE SCALE ANALYSIS]</scope>
</reference>
<reference key="20">
    <citation type="journal article" date="2014" name="Proc. Natl. Acad. Sci. U.S.A.">
        <title>Mapping of SUMO sites and analysis of SUMOylation changes induced by external stimuli.</title>
        <authorList>
            <person name="Impens F."/>
            <person name="Radoshevich L."/>
            <person name="Cossart P."/>
            <person name="Ribet D."/>
        </authorList>
    </citation>
    <scope>SUMOYLATION [LARGE SCALE ANALYSIS] AT LYS-676</scope>
    <scope>IDENTIFICATION BY MASS SPECTROMETRY [LARGE SCALE ANALYSIS]</scope>
</reference>
<reference key="21">
    <citation type="journal article" date="2015" name="Cell Rep.">
        <title>SUMO-2 orchestrates chromatin modifiers in response to DNA damage.</title>
        <authorList>
            <person name="Hendriks I.A."/>
            <person name="Treffers L.W."/>
            <person name="Verlaan-de Vries M."/>
            <person name="Olsen J.V."/>
            <person name="Vertegaal A.C."/>
        </authorList>
    </citation>
    <scope>SUMOYLATION [LARGE SCALE ANALYSIS] AT LYS-601 AND LYS-1178</scope>
    <scope>IDENTIFICATION BY MASS SPECTROMETRY [LARGE SCALE ANALYSIS]</scope>
</reference>
<reference key="22">
    <citation type="journal article" date="2017" name="Nat. Struct. Mol. Biol.">
        <title>Site-specific mapping of the human SUMO proteome reveals co-modification with phosphorylation.</title>
        <authorList>
            <person name="Hendriks I.A."/>
            <person name="Lyon D."/>
            <person name="Young C."/>
            <person name="Jensen L.J."/>
            <person name="Vertegaal A.C."/>
            <person name="Nielsen M.L."/>
        </authorList>
    </citation>
    <scope>SUMOYLATION [LARGE SCALE ANALYSIS] AT LYS-596; LYS-601; LYS-610; LYS-676; LYS-1126 AND LYS-1178</scope>
    <scope>IDENTIFICATION BY MASS SPECTROMETRY [LARGE SCALE ANALYSIS]</scope>
</reference>
<sequence>MKKKTVCTLNMGDKKYEDMEGEENGDNTISTGLLYSEADRCPICLNCLLEKEVGFPESCNHVFCMTCILKWAETLASCPIDRKPFQAVFKFSALEGYVKVQVKKQLRETKDKKNENSFEKQVSCHENSKSCIRRKAIVREDLLSAKVCDLKWIHRNSLYSETGGKKNAAIKINKPQRSNWSTNQCFRNFFSNMFSSVSHSGESSFTYRAYCTEFIEASEISALIRQKRHELELSWFPDTLPGIGRIGFIPWNVETEVLPLISSVLPRTIFPTSTISFEHFGTSCKGYALAHTQEGEEKKQTSGTSNTRGSRRKPAMTTPTRRSTRNTRAETASQSQRSPISDNSGCDAPGNSNPSLSVPSSAESEKQTRQAPKRKSVRRGRKPPLLKKKLRSSVAAPEKSSSNDSVDEETAESDTSPVLEKEHQPDVDSSNICTVQTHVENQSANCLKSCNEQIEESEKHTANYDTEERVGSSSSESCAQDLPVLVGEEGEVKKLENTGIEANVLCLESEISENILEKGGDPLEKQDQISGLSQSEVKTDVCTVHLPNDFPTCLTSESKVYQPVSCPLSDLSENVESVVNEEKITESSLVEITEHKDFTLKTEELIESPKLESSEGEIIQTVDRQSVKSPEVQLLGHVETEDVEIIATCDTFGNEDFNNIQDSENNLLKNNLLNTKLEKSLEEKNESLTEHPRSTELPKTHIEQIQKHFSEDNNEMIPMECDSFCSDQNESEVEPSVNADLKQMNENSVTHCSENNMPSSDLADEKVETVSQPSESPKDTIDKTKKPRTRRSRFHSPSTTWSPNKDTPQEKKRPQSPSPRRETGKESRKSQSPSPKNESARGRKKSRSQSPKKDIARERRQSQSRSPKRDTTRESRRSESLSPRRETSRENKRSQPRVKDSSPGEKSRSQSRERESDRDGQRRERERRTRKWSRSRSHSRSPSRCRTKSKSSSFGRIDRDSYSPRWKGRWANDGWRCPRGNDRYRKNDPEKQNENTRKEKNDIHLDADDPNSADKHRNDCPNWITEKINSGPDPRTRNPEKLKESHWEENRNENSGNSWNKNFGSGWVSNRGRGRGNRGRGTYRSSFAYKDQNENRWQNRKPLSGNSNSSGSESFKFVEQQSYKRKSEQEFSFDTPADRSGWTSASSWAVRKTLPADVQNYYSRRGRNSSGPQSGWMKQEEETSGQDSSLKDQTNQQVDGSQLPINMMQPQMNVMQQQMNAQHQPMNIFPYPVGVHAPLMNIQRNPFNIHPQLPLHLHTGVPLMQVATPTSVSQGLPPPPPPPPPSQQVNYIASQPDGKQLQGIPSSSHVSNNMSTPVLPAPTAAPGNTGMVQGPSSGNTSSSSHSKASNAAVKLAESKVSVAVEASADSSKTDKKLQIQEKAAQEVKLAIKPFYQNKDITKEEYKEIVRKAVDKVCHSKSGEVNSTKVANLVKAYVDKYKYSRKGSQKKTLEEPVSTEKNIG</sequence>
<comment type="function">
    <text evidence="4">Plays a role in pre-mRNA alternative splicing by regulating spliceosome assembly.</text>
</comment>
<comment type="subunit">
    <text evidence="4">Interacts with SRSF2/SFRS2, U2AF2 and SNRNP70.</text>
</comment>
<comment type="interaction">
    <interactant intactId="EBI-3934011">
        <id>Q99590</id>
    </interactant>
    <interactant intactId="EBI-742339">
        <id>P26368</id>
        <label>U2AF2</label>
    </interactant>
    <organismsDiffer>false</organismsDiffer>
    <experiments>5</experiments>
</comment>
<comment type="subcellular location">
    <subcellularLocation>
        <location evidence="4">Nucleus</location>
    </subcellularLocation>
</comment>
<comment type="alternative products">
    <event type="alternative splicing"/>
    <isoform>
        <id>Q99590-1</id>
        <name>1</name>
        <sequence type="displayed"/>
    </isoform>
    <isoform>
        <id>Q99590-2</id>
        <name>2</name>
        <sequence type="described" ref="VSP_037665"/>
    </isoform>
</comment>
<comment type="tissue specificity">
    <text evidence="3">Widely expressed.</text>
</comment>
<comment type="sequence caution" evidence="6">
    <conflict type="erroneous initiation">
        <sequence resource="EMBL-CDS" id="AAC39565"/>
    </conflict>
    <text>Truncated N-terminus.</text>
</comment>
<comment type="sequence caution" evidence="6">
    <conflict type="frameshift">
        <sequence resource="EMBL-CDS" id="AAC39565"/>
    </conflict>
</comment>
<comment type="sequence caution" evidence="6">
    <conflict type="erroneous initiation">
        <sequence resource="EMBL-CDS" id="AAH40951"/>
    </conflict>
    <text>Truncated N-terminus.</text>
</comment>
<comment type="sequence caution" evidence="6">
    <conflict type="miscellaneous discrepancy">
        <sequence resource="EMBL-CDS" id="AAH40951"/>
    </conflict>
    <text>Contaminating sequence. Potential poly-A sequence.</text>
</comment>
<protein>
    <recommendedName>
        <fullName>Protein SCAF11</fullName>
    </recommendedName>
    <alternativeName>
        <fullName>CTD-associated SR protein 11</fullName>
    </alternativeName>
    <alternativeName>
        <fullName>Renal carcinoma antigen NY-REN-40</fullName>
    </alternativeName>
    <alternativeName>
        <fullName>SC35-interacting protein 1</fullName>
    </alternativeName>
    <alternativeName>
        <fullName>SR-related and CTD-associated factor 11</fullName>
    </alternativeName>
    <alternativeName>
        <fullName>SRSF2-interacting protein</fullName>
    </alternativeName>
    <alternativeName>
        <fullName>Serine/arginine-rich splicing factor 2-interacting protein</fullName>
    </alternativeName>
    <alternativeName>
        <fullName>Splicing factor, arginine/serine-rich 2-interacting protein</fullName>
    </alternativeName>
    <alternativeName>
        <fullName>Splicing regulatory protein 129</fullName>
        <shortName>SRrp129</shortName>
    </alternativeName>
</protein>
<evidence type="ECO:0000255" key="1">
    <source>
        <dbReference type="PROSITE-ProRule" id="PRU00175"/>
    </source>
</evidence>
<evidence type="ECO:0000256" key="2">
    <source>
        <dbReference type="SAM" id="MobiDB-lite"/>
    </source>
</evidence>
<evidence type="ECO:0000269" key="3">
    <source>
    </source>
</evidence>
<evidence type="ECO:0000269" key="4">
    <source>
    </source>
</evidence>
<evidence type="ECO:0000303" key="5">
    <source>
    </source>
</evidence>
<evidence type="ECO:0000305" key="6"/>
<evidence type="ECO:0007744" key="7">
    <source>
    </source>
</evidence>
<evidence type="ECO:0007744" key="8">
    <source>
    </source>
</evidence>
<evidence type="ECO:0007744" key="9">
    <source>
    </source>
</evidence>
<evidence type="ECO:0007744" key="10">
    <source>
    </source>
</evidence>
<evidence type="ECO:0007744" key="11">
    <source>
    </source>
</evidence>
<evidence type="ECO:0007744" key="12">
    <source>
    </source>
</evidence>
<evidence type="ECO:0007744" key="13">
    <source>
    </source>
</evidence>
<evidence type="ECO:0007744" key="14">
    <source>
    </source>
</evidence>
<evidence type="ECO:0007744" key="15">
    <source>
    </source>
</evidence>
<evidence type="ECO:0007744" key="16">
    <source>
    </source>
</evidence>
<evidence type="ECO:0007744" key="17">
    <source>
    </source>
</evidence>
<evidence type="ECO:0007744" key="18">
    <source>
    </source>
</evidence>
<evidence type="ECO:0007744" key="19">
    <source>
    </source>
</evidence>
<keyword id="KW-0025">Alternative splicing</keyword>
<keyword id="KW-1017">Isopeptide bond</keyword>
<keyword id="KW-0479">Metal-binding</keyword>
<keyword id="KW-0488">Methylation</keyword>
<keyword id="KW-0507">mRNA processing</keyword>
<keyword id="KW-0508">mRNA splicing</keyword>
<keyword id="KW-0539">Nucleus</keyword>
<keyword id="KW-0597">Phosphoprotein</keyword>
<keyword id="KW-1267">Proteomics identification</keyword>
<keyword id="KW-1185">Reference proteome</keyword>
<keyword id="KW-0832">Ubl conjugation</keyword>
<keyword id="KW-0862">Zinc</keyword>
<keyword id="KW-0863">Zinc-finger</keyword>
<organism>
    <name type="scientific">Homo sapiens</name>
    <name type="common">Human</name>
    <dbReference type="NCBI Taxonomy" id="9606"/>
    <lineage>
        <taxon>Eukaryota</taxon>
        <taxon>Metazoa</taxon>
        <taxon>Chordata</taxon>
        <taxon>Craniata</taxon>
        <taxon>Vertebrata</taxon>
        <taxon>Euteleostomi</taxon>
        <taxon>Mammalia</taxon>
        <taxon>Eutheria</taxon>
        <taxon>Euarchontoglires</taxon>
        <taxon>Primates</taxon>
        <taxon>Haplorrhini</taxon>
        <taxon>Catarrhini</taxon>
        <taxon>Hominidae</taxon>
        <taxon>Homo</taxon>
    </lineage>
</organism>
<proteinExistence type="evidence at protein level"/>
<feature type="chain" id="PRO_0000076314" description="Protein SCAF11">
    <location>
        <begin position="1"/>
        <end position="1463"/>
    </location>
</feature>
<feature type="zinc finger region" description="RING-type; degenerate" evidence="1">
    <location>
        <begin position="41"/>
        <end position="82"/>
    </location>
</feature>
<feature type="region of interest" description="Disordered" evidence="2">
    <location>
        <begin position="291"/>
        <end position="428"/>
    </location>
</feature>
<feature type="region of interest" description="Disordered" evidence="2">
    <location>
        <begin position="457"/>
        <end position="478"/>
    </location>
</feature>
<feature type="region of interest" description="Disordered" evidence="2">
    <location>
        <begin position="750"/>
        <end position="1146"/>
    </location>
</feature>
<feature type="region of interest" description="Disordered" evidence="2">
    <location>
        <begin position="1161"/>
        <end position="1197"/>
    </location>
</feature>
<feature type="region of interest" description="Disordered" evidence="2">
    <location>
        <begin position="1269"/>
        <end position="1350"/>
    </location>
</feature>
<feature type="region of interest" description="Disordered" evidence="2">
    <location>
        <begin position="1444"/>
        <end position="1463"/>
    </location>
</feature>
<feature type="compositionally biased region" description="Polar residues" evidence="2">
    <location>
        <begin position="329"/>
        <end position="362"/>
    </location>
</feature>
<feature type="compositionally biased region" description="Basic residues" evidence="2">
    <location>
        <begin position="371"/>
        <end position="391"/>
    </location>
</feature>
<feature type="compositionally biased region" description="Basic and acidic residues" evidence="2">
    <location>
        <begin position="457"/>
        <end position="470"/>
    </location>
</feature>
<feature type="compositionally biased region" description="Polar residues" evidence="2">
    <location>
        <begin position="750"/>
        <end position="759"/>
    </location>
</feature>
<feature type="compositionally biased region" description="Basic residues" evidence="2">
    <location>
        <begin position="785"/>
        <end position="794"/>
    </location>
</feature>
<feature type="compositionally biased region" description="Polar residues" evidence="2">
    <location>
        <begin position="795"/>
        <end position="806"/>
    </location>
</feature>
<feature type="compositionally biased region" description="Basic and acidic residues" evidence="2">
    <location>
        <begin position="807"/>
        <end position="829"/>
    </location>
</feature>
<feature type="compositionally biased region" description="Basic and acidic residues" evidence="2">
    <location>
        <begin position="851"/>
        <end position="927"/>
    </location>
</feature>
<feature type="compositionally biased region" description="Basic residues" evidence="2">
    <location>
        <begin position="928"/>
        <end position="949"/>
    </location>
</feature>
<feature type="compositionally biased region" description="Basic and acidic residues" evidence="2">
    <location>
        <begin position="979"/>
        <end position="1019"/>
    </location>
</feature>
<feature type="compositionally biased region" description="Basic and acidic residues" evidence="2">
    <location>
        <begin position="1034"/>
        <end position="1052"/>
    </location>
</feature>
<feature type="compositionally biased region" description="Polar residues" evidence="2">
    <location>
        <begin position="1053"/>
        <end position="1063"/>
    </location>
</feature>
<feature type="compositionally biased region" description="Low complexity" evidence="2">
    <location>
        <begin position="1104"/>
        <end position="1114"/>
    </location>
</feature>
<feature type="compositionally biased region" description="Polar residues" evidence="2">
    <location>
        <begin position="1185"/>
        <end position="1197"/>
    </location>
</feature>
<feature type="compositionally biased region" description="Pro residues" evidence="2">
    <location>
        <begin position="1276"/>
        <end position="1286"/>
    </location>
</feature>
<feature type="compositionally biased region" description="Polar residues" evidence="2">
    <location>
        <begin position="1303"/>
        <end position="1316"/>
    </location>
</feature>
<feature type="compositionally biased region" description="Low complexity" evidence="2">
    <location>
        <begin position="1336"/>
        <end position="1349"/>
    </location>
</feature>
<feature type="modified residue" description="Phosphothreonine" evidence="13">
    <location>
        <position position="331"/>
    </location>
</feature>
<feature type="modified residue" description="Phosphoserine" evidence="9">
    <location>
        <position position="338"/>
    </location>
</feature>
<feature type="modified residue" description="Phosphoserine" evidence="9">
    <location>
        <position position="341"/>
    </location>
</feature>
<feature type="modified residue" description="Phosphoserine" evidence="9">
    <location>
        <position position="344"/>
    </location>
</feature>
<feature type="modified residue" description="Phosphoserine" evidence="12">
    <location>
        <position position="400"/>
    </location>
</feature>
<feature type="modified residue" description="Phosphoserine" evidence="12">
    <location>
        <position position="401"/>
    </location>
</feature>
<feature type="modified residue" description="Phosphoserine" evidence="12">
    <location>
        <position position="402"/>
    </location>
</feature>
<feature type="modified residue" description="Phosphoserine" evidence="7 9 10 11 12 13">
    <location>
        <position position="405"/>
    </location>
</feature>
<feature type="modified residue" description="Phosphothreonine" evidence="9">
    <location>
        <position position="410"/>
    </location>
</feature>
<feature type="modified residue" description="Phosphoserine" evidence="10 13">
    <location>
        <position position="413"/>
    </location>
</feature>
<feature type="modified residue" description="Phosphoserine" evidence="9 13">
    <location>
        <position position="533"/>
    </location>
</feature>
<feature type="modified residue" description="Phosphoserine" evidence="13">
    <location>
        <position position="588"/>
    </location>
</feature>
<feature type="modified residue" description="Phosphoserine" evidence="8 9 10 11 13 15">
    <location>
        <position position="608"/>
    </location>
</feature>
<feature type="modified residue" description="Phosphoserine" evidence="9 11 13">
    <location>
        <position position="614"/>
    </location>
</feature>
<feature type="modified residue" description="Phosphoserine" evidence="9 11 13">
    <location>
        <position position="680"/>
    </location>
</feature>
<feature type="modified residue" description="Phosphoserine" evidence="11 13">
    <location>
        <position position="687"/>
    </location>
</feature>
<feature type="modified residue" description="Phosphoserine" evidence="13">
    <location>
        <position position="694"/>
    </location>
</feature>
<feature type="modified residue" description="Phosphoserine" evidence="7">
    <location>
        <position position="723"/>
    </location>
</feature>
<feature type="modified residue" description="Phosphoserine" evidence="7">
    <location>
        <position position="726"/>
    </location>
</feature>
<feature type="modified residue" description="Phosphothreonine" evidence="12">
    <location>
        <position position="769"/>
    </location>
</feature>
<feature type="modified residue" description="Phosphoserine" evidence="11 13">
    <location>
        <position position="771"/>
    </location>
</feature>
<feature type="modified residue" description="Phosphoserine" evidence="11 12 13">
    <location>
        <position position="776"/>
    </location>
</feature>
<feature type="modified residue" description="Phosphoserine" evidence="9 10 11 12 13 15">
    <location>
        <position position="796"/>
    </location>
</feature>
<feature type="modified residue" description="Phosphoserine" evidence="10 13">
    <location>
        <position position="798"/>
    </location>
</feature>
<feature type="modified residue" description="Phosphoserine" evidence="9 10 12 13 15">
    <location>
        <position position="802"/>
    </location>
</feature>
<feature type="modified residue" description="Phosphothreonine" evidence="9">
    <location>
        <position position="807"/>
    </location>
</feature>
<feature type="modified residue" description="Phosphoserine" evidence="15">
    <location>
        <position position="816"/>
    </location>
</feature>
<feature type="modified residue" description="Phosphoserine" evidence="9 13">
    <location>
        <position position="963"/>
    </location>
</feature>
<feature type="modified residue" description="Phosphoserine" evidence="13">
    <location>
        <position position="1122"/>
    </location>
</feature>
<feature type="modified residue" description="Phosphoserine" evidence="9 11 13">
    <location>
        <position position="1127"/>
    </location>
</feature>
<feature type="modified residue" description="Omega-N-methylarginine" evidence="14">
    <location>
        <position position="1151"/>
    </location>
</feature>
<feature type="modified residue" description="Phosphothreonine" evidence="13">
    <location>
        <position position="1153"/>
    </location>
</feature>
<feature type="modified residue" description="Phosphoserine" evidence="11">
    <location>
        <position position="1169"/>
    </location>
</feature>
<feature type="modified residue" description="Phosphoserine" evidence="13">
    <location>
        <position position="1170"/>
    </location>
</feature>
<feature type="cross-link" description="Glycyl lysine isopeptide (Lys-Gly) (interchain with G-Cter in SUMO2)" evidence="19">
    <location>
        <position position="596"/>
    </location>
</feature>
<feature type="cross-link" description="Glycyl lysine isopeptide (Lys-Gly) (interchain with G-Cter in SUMO2)" evidence="17 18 19">
    <location>
        <position position="601"/>
    </location>
</feature>
<feature type="cross-link" description="Glycyl lysine isopeptide (Lys-Gly) (interchain with G-Cter in SUMO2)" evidence="17 19">
    <location>
        <position position="610"/>
    </location>
</feature>
<feature type="cross-link" description="Glycyl lysine isopeptide (Lys-Gly) (interchain with G-Cter in SUMO1); alternate" evidence="16">
    <location>
        <position position="676"/>
    </location>
</feature>
<feature type="cross-link" description="Glycyl lysine isopeptide (Lys-Gly) (interchain with G-Cter in SUMO2); alternate" evidence="17 19">
    <location>
        <position position="676"/>
    </location>
</feature>
<feature type="cross-link" description="Glycyl lysine isopeptide (Lys-Gly) (interchain with G-Cter in SUMO2)" evidence="19">
    <location>
        <position position="1126"/>
    </location>
</feature>
<feature type="cross-link" description="Glycyl lysine isopeptide (Lys-Gly) (interchain with G-Cter in SUMO2)" evidence="17 18 19">
    <location>
        <position position="1178"/>
    </location>
</feature>
<feature type="splice variant" id="VSP_037665" description="In isoform 2." evidence="5">
    <location>
        <begin position="1"/>
        <end position="315"/>
    </location>
</feature>
<feature type="sequence variant" id="VAR_059722" description="In dbSNP:rs7315731.">
    <original>F</original>
    <variation>Y</variation>
    <location>
        <position position="657"/>
    </location>
</feature>
<feature type="sequence variant" id="VAR_059723" description="In dbSNP:rs11574973.">
    <original>V</original>
    <variation>L</variation>
    <location>
        <position position="1261"/>
    </location>
</feature>
<feature type="sequence conflict" description="In Ref. 5; AAH40951." evidence="6" ref="5">
    <original>I</original>
    <variation>M</variation>
    <location>
        <position position="584"/>
    </location>
</feature>
<feature type="sequence conflict" description="In Ref. 5; AAH40951." evidence="6" ref="5">
    <original>D</original>
    <variation>G</variation>
    <location>
        <position position="623"/>
    </location>
</feature>
<accession>Q99590</accession>
<accession>A6NEU9</accession>
<accession>A6NLW5</accession>
<accession>Q8IW59</accession>